<dbReference type="EMBL" id="FN649414">
    <property type="protein sequence ID" value="CBJ02739.1"/>
    <property type="molecule type" value="Genomic_DNA"/>
</dbReference>
<dbReference type="RefSeq" id="WP_001389459.1">
    <property type="nucleotide sequence ID" value="NC_017633.1"/>
</dbReference>
<dbReference type="PDB" id="5ZDH">
    <property type="method" value="EM"/>
    <property type="resolution" value="3.20 A"/>
    <property type="chains" value="P/Q/R/S/T/U/V/W/X/Y/Z/a/b/c/d=25-136"/>
</dbReference>
<dbReference type="PDBsum" id="5ZDH"/>
<dbReference type="EMDB" id="EMD-6917"/>
<dbReference type="SMR" id="E3PJ88"/>
<dbReference type="KEGG" id="elh:ETEC_3239"/>
<dbReference type="HOGENOM" id="CLU_156494_0_0_6"/>
<dbReference type="GO" id="GO:0009279">
    <property type="term" value="C:cell outer membrane"/>
    <property type="evidence" value="ECO:0007669"/>
    <property type="project" value="UniProtKB-SubCell"/>
</dbReference>
<dbReference type="Gene3D" id="3.30.300.250">
    <property type="match status" value="1"/>
</dbReference>
<dbReference type="InterPro" id="IPR016502">
    <property type="entry name" value="T2SSS_2"/>
</dbReference>
<dbReference type="Pfam" id="PF16549">
    <property type="entry name" value="T2SSS_2"/>
    <property type="match status" value="1"/>
</dbReference>
<dbReference type="PIRSF" id="PIRSF007010">
    <property type="entry name" value="UCP007010"/>
    <property type="match status" value="1"/>
</dbReference>
<dbReference type="PROSITE" id="PS51257">
    <property type="entry name" value="PROKAR_LIPOPROTEIN"/>
    <property type="match status" value="1"/>
</dbReference>
<organism>
    <name type="scientific">Escherichia coli O78:H11 (strain H10407 / ETEC)</name>
    <dbReference type="NCBI Taxonomy" id="316401"/>
    <lineage>
        <taxon>Bacteria</taxon>
        <taxon>Pseudomonadati</taxon>
        <taxon>Pseudomonadota</taxon>
        <taxon>Gammaproteobacteria</taxon>
        <taxon>Enterobacterales</taxon>
        <taxon>Enterobacteriaceae</taxon>
        <taxon>Escherichia</taxon>
    </lineage>
</organism>
<comment type="function">
    <text evidence="2 3 7">Part of a type II secretion system (T2SS, formerly general secretion pathway, GSP) for the export of folded proteins across the outer membrane (Probable). Required for correct assembly of the type II secretion system-beta (T2SS-beta), for localization of GspD-beta to the cell outer membrane and for export of a labile enterotoxin by T2SS-beta (PubMed:22585966). Each AspS2 binds to 2 GspD2 subunits and may clamp the monomers together, stabilizing structure and accelerating its assembly (PubMed:29632366).</text>
</comment>
<comment type="subunit">
    <text evidence="3">Cryo-electron microscopy shows that the complex forms a cylindrical channel with 15 GspD2 subunits, each of which interacts with its surrounding AspS2 (GspS-beta).</text>
</comment>
<comment type="subcellular location">
    <subcellularLocation>
        <location evidence="7 8">Cell outer membrane</location>
        <topology evidence="7 8">Lipid-anchor</topology>
        <orientation evidence="7 8">Periplasmic side</orientation>
    </subcellularLocation>
    <text evidence="7">Protein can also be located in the cell inner membrane.</text>
</comment>
<comment type="disruption phenotype">
    <text evidence="2">Severely disrupts assembly and function of T2SS-beta, mislocalization of GspD-beta to the cell inner membrane.</text>
</comment>
<comment type="miscellaneous">
    <text evidence="8">Encoded in a type II secretion system (T2SS-beta); this strain encodes 2 T2SS but only this one (beta) is expressed under standard laboratory conditions.</text>
</comment>
<comment type="similarity">
    <text evidence="6">Belongs to the GspS/AspS pilotin family.</text>
</comment>
<proteinExistence type="evidence at protein level"/>
<protein>
    <recommendedName>
        <fullName evidence="5">Pilotin AspS 2</fullName>
    </recommendedName>
    <alternativeName>
        <fullName evidence="4">Type II secretion system-beta protein GspS-beta</fullName>
    </alternativeName>
</protein>
<name>ASPS2_ECOH1</name>
<feature type="signal peptide" evidence="1">
    <location>
        <begin position="1"/>
        <end position="24"/>
    </location>
</feature>
<feature type="chain" id="PRO_5003179701" description="Pilotin AspS 2" evidence="1">
    <location>
        <begin position="25"/>
        <end position="136"/>
    </location>
</feature>
<feature type="lipid moiety-binding region" description="N-palmitoyl cysteine" evidence="1">
    <location>
        <position position="25"/>
    </location>
</feature>
<feature type="lipid moiety-binding region" description="S-diacylglycerol cysteine" evidence="1">
    <location>
        <position position="25"/>
    </location>
</feature>
<feature type="disulfide bond" evidence="9">
    <location>
        <begin position="94"/>
        <end position="131"/>
    </location>
</feature>
<feature type="mutagenesis site" description="Precursor protein is not processed." evidence="2">
    <original>C</original>
    <variation>A</variation>
    <location>
        <position position="25"/>
    </location>
</feature>
<feature type="mutagenesis site" description="Protein is found almost exclusively in the inner membrane, does not restore targeting of GspD-beta to the outer membrane." evidence="2">
    <original>AS</original>
    <variation>DD</variation>
    <location>
        <begin position="26"/>
        <end position="27"/>
    </location>
</feature>
<sequence>MSIKQMPGRVLISLLLSVTGLLSGCASHNENASLLAKKQAQNISQNLPIKSAGYTLVLAQSSGTTVKMTIISEAGTQTTQTPDAFLTSYQRQMCADPTVKLMLTEGINYSITINDTRTGNQYQRKLDRTTCGIVKA</sequence>
<keyword id="KW-0002">3D-structure</keyword>
<keyword id="KW-0998">Cell outer membrane</keyword>
<keyword id="KW-1015">Disulfide bond</keyword>
<keyword id="KW-0449">Lipoprotein</keyword>
<keyword id="KW-0472">Membrane</keyword>
<keyword id="KW-0564">Palmitate</keyword>
<keyword id="KW-0732">Signal</keyword>
<evidence type="ECO:0000255" key="1">
    <source>
        <dbReference type="PROSITE-ProRule" id="PRU00303"/>
    </source>
</evidence>
<evidence type="ECO:0000269" key="2">
    <source>
    </source>
</evidence>
<evidence type="ECO:0000269" key="3">
    <source>
    </source>
</evidence>
<evidence type="ECO:0000303" key="4">
    <source>
    </source>
</evidence>
<evidence type="ECO:0000303" key="5">
    <source>
    </source>
</evidence>
<evidence type="ECO:0000305" key="6"/>
<evidence type="ECO:0000305" key="7">
    <source>
    </source>
</evidence>
<evidence type="ECO:0000305" key="8">
    <source>
    </source>
</evidence>
<evidence type="ECO:0007744" key="9">
    <source>
        <dbReference type="PDB" id="5ZDH"/>
    </source>
</evidence>
<reference key="1">
    <citation type="journal article" date="2010" name="J. Bacteriol.">
        <title>A commensal gone bad: complete genome sequence of the prototypical enterotoxigenic Escherichia coli strain H10407.</title>
        <authorList>
            <person name="Crossman L.C."/>
            <person name="Chaudhuri R.R."/>
            <person name="Beatson S.A."/>
            <person name="Wells T.J."/>
            <person name="Desvaux M."/>
            <person name="Cunningham A.F."/>
            <person name="Petty N.K."/>
            <person name="Mahon V."/>
            <person name="Brinkley C."/>
            <person name="Hobman J.L."/>
            <person name="Savarino S.J."/>
            <person name="Turner S.M."/>
            <person name="Pallen M.J."/>
            <person name="Penn C.W."/>
            <person name="Parkhill J."/>
            <person name="Turner A.K."/>
            <person name="Johnson T.J."/>
            <person name="Thomson N.R."/>
            <person name="Smith S.G."/>
            <person name="Henderson I.R."/>
        </authorList>
    </citation>
    <scope>NUCLEOTIDE SEQUENCE [LARGE SCALE GENOMIC DNA]</scope>
    <source>
        <strain>H10407 / ETEC</strain>
    </source>
</reference>
<reference key="2">
    <citation type="journal article" date="2012" name="Infect. Immun.">
        <title>YghG (GspSbeta) is a novel pilot protein required for localization of the GspSbeta type II secretion system secretin of enterotoxigenic Escherichia coli.</title>
        <authorList>
            <person name="Strozen T.G."/>
            <person name="Li G."/>
            <person name="Howard S.P."/>
        </authorList>
    </citation>
    <scope>FUNCTION</scope>
    <scope>SUBCELLULAR LOCATION</scope>
    <scope>DISRUPTION PHENOTYPE</scope>
    <scope>MUTAGENESIS OF CYS-25 AND 26-ALA-SER-27</scope>
    <source>
        <strain>H10407 / ETEC</strain>
    </source>
</reference>
<reference evidence="9" key="3">
    <citation type="journal article" date="2018" name="Nat. Microbiol.">
        <title>Structural insight into the assembly of the type II secretion system pilotin-secretin complex from enterotoxigenic Escherichia coli.</title>
        <authorList>
            <person name="Yin M."/>
            <person name="Yan Z."/>
            <person name="Li X."/>
        </authorList>
    </citation>
    <scope>STRUCTURE BY ELECTRON MICROSCOPY (3.20 ANGSTROMS) OF 25-136 IN COMPLEX WITH GSPD2</scope>
    <scope>FUNCTION</scope>
    <scope>SUBCELLULAR LOCATION</scope>
    <scope>DISULFIDE BONDS</scope>
    <source>
        <strain>H10407 / ETEC</strain>
    </source>
</reference>
<accession>E3PJ88</accession>
<gene>
    <name evidence="6" type="primary">gspS2</name>
    <name evidence="5" type="synonym">aspS</name>
    <name evidence="4" type="synonym">gspS-beta</name>
    <name evidence="4" type="synonym">yghG</name>
    <name type="ordered locus">ETEC_3239</name>
</gene>